<reference evidence="5" key="1">
    <citation type="journal article" date="1999" name="Biochim. Biophys. Acta">
        <title>Cloning and functional expression of the cytoplasmic form of rat aminopeptidase P.</title>
        <authorList>
            <person name="Czirjak G."/>
            <person name="Burkhart W.A."/>
            <person name="Moyer M.B."/>
            <person name="Antal J."/>
            <person name="Shears S.B."/>
            <person name="Enyedi P."/>
        </authorList>
    </citation>
    <scope>NUCLEOTIDE SEQUENCE [MRNA]</scope>
    <scope>PROTEIN SEQUENCE OF 1-19; 85-89; 96-105; 107-112; 372-385; 422-442 AND 599-606</scope>
    <scope>FUNCTION</scope>
    <scope>CATALYTIC ACTIVITY</scope>
    <scope>ACTIVITY REGULATION</scope>
    <scope>SUBCELLULAR LOCATION</scope>
    <scope>TISSUE SPECIFICITY</scope>
    <source>
        <tissue evidence="5">Liver</tissue>
    </source>
</reference>
<reference key="2">
    <citation type="journal article" date="2004" name="Genome Res.">
        <title>The status, quality, and expansion of the NIH full-length cDNA project: the Mammalian Gene Collection (MGC).</title>
        <authorList>
            <consortium name="The MGC Project Team"/>
        </authorList>
    </citation>
    <scope>NUCLEOTIDE SEQUENCE [LARGE SCALE MRNA]</scope>
    <source>
        <tissue>Prostate</tissue>
    </source>
</reference>
<proteinExistence type="evidence at protein level"/>
<gene>
    <name evidence="6" type="primary">Xpnpep1</name>
    <name type="synonym">App</name>
</gene>
<keyword id="KW-0007">Acetylation</keyword>
<keyword id="KW-0031">Aminopeptidase</keyword>
<keyword id="KW-0963">Cytoplasm</keyword>
<keyword id="KW-0903">Direct protein sequencing</keyword>
<keyword id="KW-0378">Hydrolase</keyword>
<keyword id="KW-0464">Manganese</keyword>
<keyword id="KW-0479">Metal-binding</keyword>
<keyword id="KW-0482">Metalloprotease</keyword>
<keyword id="KW-0645">Protease</keyword>
<keyword id="KW-1185">Reference proteome</keyword>
<dbReference type="EC" id="3.4.11.9" evidence="3"/>
<dbReference type="EMBL" id="AF038591">
    <property type="protein sequence ID" value="AAB95331.1"/>
    <property type="molecule type" value="mRNA"/>
</dbReference>
<dbReference type="EMBL" id="BC061758">
    <property type="protein sequence ID" value="AAH61758.1"/>
    <property type="molecule type" value="mRNA"/>
</dbReference>
<dbReference type="RefSeq" id="NP_571988.1">
    <property type="nucleotide sequence ID" value="NM_131913.3"/>
</dbReference>
<dbReference type="RefSeq" id="XP_063128473.1">
    <property type="nucleotide sequence ID" value="XM_063272403.1"/>
</dbReference>
<dbReference type="SMR" id="O54975"/>
<dbReference type="BioGRID" id="250985">
    <property type="interactions" value="2"/>
</dbReference>
<dbReference type="FunCoup" id="O54975">
    <property type="interactions" value="3051"/>
</dbReference>
<dbReference type="STRING" id="10116.ENSRNOP00000069329"/>
<dbReference type="MEROPS" id="M24.009"/>
<dbReference type="iPTMnet" id="O54975"/>
<dbReference type="PhosphoSitePlus" id="O54975"/>
<dbReference type="jPOST" id="O54975"/>
<dbReference type="PaxDb" id="10116-ENSRNOP00000031325"/>
<dbReference type="PeptideAtlas" id="O54975"/>
<dbReference type="GeneID" id="170751"/>
<dbReference type="KEGG" id="rno:170751"/>
<dbReference type="UCSC" id="RGD:621274">
    <property type="organism name" value="rat"/>
</dbReference>
<dbReference type="AGR" id="RGD:621274"/>
<dbReference type="CTD" id="7511"/>
<dbReference type="RGD" id="621274">
    <property type="gene designation" value="Xpnpep1"/>
</dbReference>
<dbReference type="VEuPathDB" id="HostDB:ENSRNOG00000012084"/>
<dbReference type="eggNOG" id="KOG2413">
    <property type="taxonomic scope" value="Eukaryota"/>
</dbReference>
<dbReference type="HOGENOM" id="CLU_011781_2_2_1"/>
<dbReference type="InParanoid" id="O54975"/>
<dbReference type="PhylomeDB" id="O54975"/>
<dbReference type="PRO" id="PR:O54975"/>
<dbReference type="Proteomes" id="UP000002494">
    <property type="component" value="Chromosome 1"/>
</dbReference>
<dbReference type="Bgee" id="ENSRNOG00000012084">
    <property type="expression patterns" value="Expressed in duodenum and 20 other cell types or tissues"/>
</dbReference>
<dbReference type="ExpressionAtlas" id="O54975">
    <property type="expression patterns" value="baseline and differential"/>
</dbReference>
<dbReference type="GO" id="GO:0005737">
    <property type="term" value="C:cytoplasm"/>
    <property type="evidence" value="ECO:0000314"/>
    <property type="project" value="UniProtKB"/>
</dbReference>
<dbReference type="GO" id="GO:0005829">
    <property type="term" value="C:cytosol"/>
    <property type="evidence" value="ECO:0000266"/>
    <property type="project" value="RGD"/>
</dbReference>
<dbReference type="GO" id="GO:0004177">
    <property type="term" value="F:aminopeptidase activity"/>
    <property type="evidence" value="ECO:0000314"/>
    <property type="project" value="UniProtKB"/>
</dbReference>
<dbReference type="GO" id="GO:0030145">
    <property type="term" value="F:manganese ion binding"/>
    <property type="evidence" value="ECO:0000250"/>
    <property type="project" value="UniProtKB"/>
</dbReference>
<dbReference type="GO" id="GO:0070006">
    <property type="term" value="F:metalloaminopeptidase activity"/>
    <property type="evidence" value="ECO:0000250"/>
    <property type="project" value="UniProtKB"/>
</dbReference>
<dbReference type="GO" id="GO:0042803">
    <property type="term" value="F:protein homodimerization activity"/>
    <property type="evidence" value="ECO:0000266"/>
    <property type="project" value="RGD"/>
</dbReference>
<dbReference type="GO" id="GO:0010815">
    <property type="term" value="P:bradykinin catabolic process"/>
    <property type="evidence" value="ECO:0000250"/>
    <property type="project" value="UniProtKB"/>
</dbReference>
<dbReference type="GO" id="GO:0043069">
    <property type="term" value="P:negative regulation of programmed cell death"/>
    <property type="evidence" value="ECO:0000250"/>
    <property type="project" value="UniProtKB"/>
</dbReference>
<dbReference type="GO" id="GO:0006508">
    <property type="term" value="P:proteolysis"/>
    <property type="evidence" value="ECO:0000314"/>
    <property type="project" value="UniProtKB"/>
</dbReference>
<dbReference type="CDD" id="cd01085">
    <property type="entry name" value="APP"/>
    <property type="match status" value="1"/>
</dbReference>
<dbReference type="FunFam" id="3.40.350.10:FF:000001">
    <property type="entry name" value="Putative xaa-Pro aminopeptidase 1"/>
    <property type="match status" value="1"/>
</dbReference>
<dbReference type="FunFam" id="3.40.350.10:FF:000004">
    <property type="entry name" value="xaa-Pro aminopeptidase 1 isoform X1"/>
    <property type="match status" value="1"/>
</dbReference>
<dbReference type="FunFam" id="3.90.230.10:FF:000004">
    <property type="entry name" value="xaa-Pro aminopeptidase 1 isoform X1"/>
    <property type="match status" value="1"/>
</dbReference>
<dbReference type="Gene3D" id="3.90.230.10">
    <property type="entry name" value="Creatinase/methionine aminopeptidase superfamily"/>
    <property type="match status" value="1"/>
</dbReference>
<dbReference type="Gene3D" id="3.40.350.10">
    <property type="entry name" value="Creatinase/prolidase N-terminal domain"/>
    <property type="match status" value="2"/>
</dbReference>
<dbReference type="InterPro" id="IPR029149">
    <property type="entry name" value="Creatin/AminoP/Spt16_N"/>
</dbReference>
<dbReference type="InterPro" id="IPR036005">
    <property type="entry name" value="Creatinase/aminopeptidase-like"/>
</dbReference>
<dbReference type="InterPro" id="IPR000587">
    <property type="entry name" value="Creatinase_N"/>
</dbReference>
<dbReference type="InterPro" id="IPR000994">
    <property type="entry name" value="Pept_M24"/>
</dbReference>
<dbReference type="InterPro" id="IPR033740">
    <property type="entry name" value="Pept_M24B"/>
</dbReference>
<dbReference type="InterPro" id="IPR032416">
    <property type="entry name" value="Peptidase_M24_C"/>
</dbReference>
<dbReference type="InterPro" id="IPR001131">
    <property type="entry name" value="Peptidase_M24B_aminopep-P_CS"/>
</dbReference>
<dbReference type="InterPro" id="IPR050422">
    <property type="entry name" value="X-Pro_aminopeptidase_P"/>
</dbReference>
<dbReference type="PANTHER" id="PTHR43763">
    <property type="entry name" value="XAA-PRO AMINOPEPTIDASE 1"/>
    <property type="match status" value="1"/>
</dbReference>
<dbReference type="PANTHER" id="PTHR43763:SF6">
    <property type="entry name" value="XAA-PRO AMINOPEPTIDASE 1"/>
    <property type="match status" value="1"/>
</dbReference>
<dbReference type="Pfam" id="PF01321">
    <property type="entry name" value="Creatinase_N"/>
    <property type="match status" value="1"/>
</dbReference>
<dbReference type="Pfam" id="PF16189">
    <property type="entry name" value="Creatinase_N_2"/>
    <property type="match status" value="1"/>
</dbReference>
<dbReference type="Pfam" id="PF00557">
    <property type="entry name" value="Peptidase_M24"/>
    <property type="match status" value="1"/>
</dbReference>
<dbReference type="Pfam" id="PF16188">
    <property type="entry name" value="Peptidase_M24_C"/>
    <property type="match status" value="1"/>
</dbReference>
<dbReference type="SUPFAM" id="SSF55920">
    <property type="entry name" value="Creatinase/aminopeptidase"/>
    <property type="match status" value="1"/>
</dbReference>
<dbReference type="SUPFAM" id="SSF53092">
    <property type="entry name" value="Creatinase/prolidase N-terminal domain"/>
    <property type="match status" value="1"/>
</dbReference>
<dbReference type="PROSITE" id="PS00491">
    <property type="entry name" value="PROLINE_PEPTIDASE"/>
    <property type="match status" value="1"/>
</dbReference>
<organism>
    <name type="scientific">Rattus norvegicus</name>
    <name type="common">Rat</name>
    <dbReference type="NCBI Taxonomy" id="10116"/>
    <lineage>
        <taxon>Eukaryota</taxon>
        <taxon>Metazoa</taxon>
        <taxon>Chordata</taxon>
        <taxon>Craniata</taxon>
        <taxon>Vertebrata</taxon>
        <taxon>Euteleostomi</taxon>
        <taxon>Mammalia</taxon>
        <taxon>Eutheria</taxon>
        <taxon>Euarchontoglires</taxon>
        <taxon>Glires</taxon>
        <taxon>Rodentia</taxon>
        <taxon>Myomorpha</taxon>
        <taxon>Muroidea</taxon>
        <taxon>Muridae</taxon>
        <taxon>Murinae</taxon>
        <taxon>Rattus</taxon>
    </lineage>
</organism>
<feature type="chain" id="PRO_0000185085" description="Xaa-Pro aminopeptidase 1">
    <location>
        <begin position="1"/>
        <end position="623"/>
    </location>
</feature>
<feature type="binding site" evidence="1">
    <location>
        <position position="77"/>
    </location>
    <ligand>
        <name>a peptide</name>
        <dbReference type="ChEBI" id="CHEBI:60466"/>
    </ligand>
</feature>
<feature type="binding site" evidence="1">
    <location>
        <position position="395"/>
    </location>
    <ligand>
        <name>a peptide</name>
        <dbReference type="ChEBI" id="CHEBI:60466"/>
    </ligand>
</feature>
<feature type="binding site" evidence="2">
    <location>
        <position position="415"/>
    </location>
    <ligand>
        <name>Mn(2+)</name>
        <dbReference type="ChEBI" id="CHEBI:29035"/>
        <label>1</label>
    </ligand>
</feature>
<feature type="binding site" evidence="2">
    <location>
        <position position="426"/>
    </location>
    <ligand>
        <name>Mn(2+)</name>
        <dbReference type="ChEBI" id="CHEBI:29035"/>
        <label>1</label>
    </ligand>
</feature>
<feature type="binding site" evidence="2">
    <location>
        <position position="426"/>
    </location>
    <ligand>
        <name>Mn(2+)</name>
        <dbReference type="ChEBI" id="CHEBI:29035"/>
        <label>2</label>
    </ligand>
</feature>
<feature type="binding site" evidence="1">
    <location>
        <position position="489"/>
    </location>
    <ligand>
        <name>a peptide</name>
        <dbReference type="ChEBI" id="CHEBI:60466"/>
    </ligand>
</feature>
<feature type="binding site" evidence="2">
    <location>
        <position position="489"/>
    </location>
    <ligand>
        <name>Mn(2+)</name>
        <dbReference type="ChEBI" id="CHEBI:29035"/>
        <label>2</label>
    </ligand>
</feature>
<feature type="binding site" evidence="1">
    <location>
        <position position="498"/>
    </location>
    <ligand>
        <name>a peptide</name>
        <dbReference type="ChEBI" id="CHEBI:60466"/>
    </ligand>
</feature>
<feature type="binding site" evidence="1">
    <location>
        <position position="523"/>
    </location>
    <ligand>
        <name>a peptide</name>
        <dbReference type="ChEBI" id="CHEBI:60466"/>
    </ligand>
</feature>
<feature type="binding site" evidence="2">
    <location>
        <position position="523"/>
    </location>
    <ligand>
        <name>Mn(2+)</name>
        <dbReference type="ChEBI" id="CHEBI:29035"/>
        <label>2</label>
    </ligand>
</feature>
<feature type="binding site" evidence="2">
    <location>
        <position position="537"/>
    </location>
    <ligand>
        <name>Mn(2+)</name>
        <dbReference type="ChEBI" id="CHEBI:29035"/>
        <label>1</label>
    </ligand>
</feature>
<feature type="binding site" evidence="2">
    <location>
        <position position="537"/>
    </location>
    <ligand>
        <name>Mn(2+)</name>
        <dbReference type="ChEBI" id="CHEBI:29035"/>
        <label>2</label>
    </ligand>
</feature>
<feature type="modified residue" description="N6-acetyllysine" evidence="2">
    <location>
        <position position="304"/>
    </location>
</feature>
<evidence type="ECO:0000250" key="1">
    <source>
        <dbReference type="UniProtKB" id="O44750"/>
    </source>
</evidence>
<evidence type="ECO:0000250" key="2">
    <source>
        <dbReference type="UniProtKB" id="Q9NQW7"/>
    </source>
</evidence>
<evidence type="ECO:0000269" key="3">
    <source>
    </source>
</evidence>
<evidence type="ECO:0000305" key="4"/>
<evidence type="ECO:0000312" key="5">
    <source>
        <dbReference type="EMBL" id="AAB95331.1"/>
    </source>
</evidence>
<evidence type="ECO:0000312" key="6">
    <source>
        <dbReference type="RGD" id="621274"/>
    </source>
</evidence>
<sequence length="623" mass="69658">MAPKVTSELLRQLRQAMRNSECVAEPIQAYIIPSGDAHQSEYIAPCDCRRAFVSGFDGSAGTAIITEEHAAMWTDGRYFLQAAKQMDNNWTLMKMGLKDTPTQEDWLVSVLPEGSRVGVDPLIIPTDYWKKMAKVLRSAGHHLVPVKENLVDKIWTDRPERPCKPLLTLGLDYTGISWKEKVADLRLKMAERSIVWFVVTALDEIAWLFNLRGSDVEHNPVFFSYAIIGLERIMLFIDGDRIDAPGVKQHLLLDLGLEAEYKIQVLPYKSILSELKTLCADLSPREKVWVSDKASYAVSEAIPKDHRCCMPYTPICIAKAVKNSAESAGMRRAHIKDAVALCELFNWLEQEVPKGGVTEISAADKAEEFRRQQADFVDLSFPTISSTGPNGAIIHYAPIPETNRTLSLDEVYLIDSGAQYKDGTTDVTRTMHFGTPTAYEKECFTYVLKGHIAVSAAVFPTGTKGHLLDSFARSALWDSGLDYLHGTGHGVGSFLNVHEGPCGISYKTFSDEPLEAGMIVTDEPGYYEDGAFGIRIENVVLVVPAKTKYNFNNRGSLTFEPLTLVPIQTKMIDVDALTDKECDWLNSYHQTCRDVIGKELQTQGRQEALEWLLRETEPISRQH</sequence>
<accession>O54975</accession>
<comment type="function">
    <text evidence="2 3">Metalloaminopeptidase that catalyzes the removal of a penultimate prolyl residue from the N-termini of peptides, such as Arg-Pro-Pro (PubMed:10095056). Contributes to the degradation of bradykinin (By similarity).</text>
</comment>
<comment type="catalytic activity">
    <reaction evidence="3">
        <text>Release of any N-terminal amino acid, including proline, that is linked to proline, even from a dipeptide or tripeptide.</text>
        <dbReference type="EC" id="3.4.11.9"/>
    </reaction>
</comment>
<comment type="cofactor">
    <cofactor evidence="2">
        <name>Mn(2+)</name>
        <dbReference type="ChEBI" id="CHEBI:29035"/>
    </cofactor>
    <text evidence="2">Binds 2 manganese ions per subunit.</text>
</comment>
<comment type="activity regulation">
    <text evidence="3">Inhibited by inositol hexakisphosphate.</text>
</comment>
<comment type="subunit">
    <text evidence="2">Homodimer.</text>
</comment>
<comment type="subcellular location">
    <subcellularLocation>
        <location evidence="3">Cytoplasm</location>
    </subcellularLocation>
</comment>
<comment type="tissue specificity">
    <text evidence="3">Expressed in all tissues tested, including liver, adrenal decapsular tissue, adrenal capsular tissue, corpus luteum, testis, submandibular gland, thymus, brain, cerebellum and heart. Highest levels in testis.</text>
</comment>
<comment type="similarity">
    <text evidence="4">Belongs to the peptidase M24B family.</text>
</comment>
<protein>
    <recommendedName>
        <fullName>Xaa-Pro aminopeptidase 1</fullName>
        <ecNumber evidence="3">3.4.11.9</ecNumber>
    </recommendedName>
    <alternativeName>
        <fullName>Aminoacylproline aminopeptidase</fullName>
    </alternativeName>
    <alternativeName>
        <fullName>Cytosolic aminopeptidase P</fullName>
    </alternativeName>
    <alternativeName>
        <fullName>Soluble aminopeptidase P</fullName>
        <shortName>sAmp</shortName>
    </alternativeName>
    <alternativeName>
        <fullName>X-Pro aminopeptidase 1</fullName>
    </alternativeName>
    <alternativeName>
        <fullName>X-prolyl aminopeptidase 1, soluble</fullName>
    </alternativeName>
</protein>
<name>XPP1_RAT</name>